<gene>
    <name evidence="1" type="primary">ilvC</name>
    <name type="ordered locus">JJD26997_1367</name>
</gene>
<dbReference type="EC" id="1.1.1.86" evidence="1"/>
<dbReference type="EMBL" id="CP000768">
    <property type="protein sequence ID" value="ABS44375.1"/>
    <property type="molecule type" value="Genomic_DNA"/>
</dbReference>
<dbReference type="SMR" id="A7H4H9"/>
<dbReference type="KEGG" id="cjd:JJD26997_1367"/>
<dbReference type="HOGENOM" id="CLU_033821_0_1_7"/>
<dbReference type="UniPathway" id="UPA00047">
    <property type="reaction ID" value="UER00056"/>
</dbReference>
<dbReference type="UniPathway" id="UPA00049">
    <property type="reaction ID" value="UER00060"/>
</dbReference>
<dbReference type="Proteomes" id="UP000002302">
    <property type="component" value="Chromosome"/>
</dbReference>
<dbReference type="GO" id="GO:0005829">
    <property type="term" value="C:cytosol"/>
    <property type="evidence" value="ECO:0007669"/>
    <property type="project" value="TreeGrafter"/>
</dbReference>
<dbReference type="GO" id="GO:0004455">
    <property type="term" value="F:ketol-acid reductoisomerase activity"/>
    <property type="evidence" value="ECO:0007669"/>
    <property type="project" value="UniProtKB-UniRule"/>
</dbReference>
<dbReference type="GO" id="GO:0000287">
    <property type="term" value="F:magnesium ion binding"/>
    <property type="evidence" value="ECO:0007669"/>
    <property type="project" value="UniProtKB-UniRule"/>
</dbReference>
<dbReference type="GO" id="GO:0050661">
    <property type="term" value="F:NADP binding"/>
    <property type="evidence" value="ECO:0007669"/>
    <property type="project" value="InterPro"/>
</dbReference>
<dbReference type="GO" id="GO:0009097">
    <property type="term" value="P:isoleucine biosynthetic process"/>
    <property type="evidence" value="ECO:0007669"/>
    <property type="project" value="UniProtKB-UniRule"/>
</dbReference>
<dbReference type="GO" id="GO:0009099">
    <property type="term" value="P:L-valine biosynthetic process"/>
    <property type="evidence" value="ECO:0007669"/>
    <property type="project" value="UniProtKB-UniRule"/>
</dbReference>
<dbReference type="FunFam" id="3.40.50.720:FF:000023">
    <property type="entry name" value="Ketol-acid reductoisomerase (NADP(+))"/>
    <property type="match status" value="1"/>
</dbReference>
<dbReference type="Gene3D" id="6.10.240.10">
    <property type="match status" value="1"/>
</dbReference>
<dbReference type="Gene3D" id="3.40.50.720">
    <property type="entry name" value="NAD(P)-binding Rossmann-like Domain"/>
    <property type="match status" value="1"/>
</dbReference>
<dbReference type="HAMAP" id="MF_00435">
    <property type="entry name" value="IlvC"/>
    <property type="match status" value="1"/>
</dbReference>
<dbReference type="InterPro" id="IPR008927">
    <property type="entry name" value="6-PGluconate_DH-like_C_sf"/>
</dbReference>
<dbReference type="InterPro" id="IPR013023">
    <property type="entry name" value="KARI"/>
</dbReference>
<dbReference type="InterPro" id="IPR000506">
    <property type="entry name" value="KARI_C"/>
</dbReference>
<dbReference type="InterPro" id="IPR013116">
    <property type="entry name" value="KARI_N"/>
</dbReference>
<dbReference type="InterPro" id="IPR014359">
    <property type="entry name" value="KARI_prok"/>
</dbReference>
<dbReference type="InterPro" id="IPR036291">
    <property type="entry name" value="NAD(P)-bd_dom_sf"/>
</dbReference>
<dbReference type="NCBIfam" id="TIGR00465">
    <property type="entry name" value="ilvC"/>
    <property type="match status" value="1"/>
</dbReference>
<dbReference type="NCBIfam" id="NF004017">
    <property type="entry name" value="PRK05479.1"/>
    <property type="match status" value="1"/>
</dbReference>
<dbReference type="NCBIfam" id="NF009940">
    <property type="entry name" value="PRK13403.1"/>
    <property type="match status" value="1"/>
</dbReference>
<dbReference type="PANTHER" id="PTHR21371">
    <property type="entry name" value="KETOL-ACID REDUCTOISOMERASE, MITOCHONDRIAL"/>
    <property type="match status" value="1"/>
</dbReference>
<dbReference type="PANTHER" id="PTHR21371:SF1">
    <property type="entry name" value="KETOL-ACID REDUCTOISOMERASE, MITOCHONDRIAL"/>
    <property type="match status" value="1"/>
</dbReference>
<dbReference type="Pfam" id="PF01450">
    <property type="entry name" value="KARI_C"/>
    <property type="match status" value="1"/>
</dbReference>
<dbReference type="Pfam" id="PF07991">
    <property type="entry name" value="KARI_N"/>
    <property type="match status" value="1"/>
</dbReference>
<dbReference type="PIRSF" id="PIRSF000116">
    <property type="entry name" value="IlvC_gammaproteo"/>
    <property type="match status" value="1"/>
</dbReference>
<dbReference type="SUPFAM" id="SSF48179">
    <property type="entry name" value="6-phosphogluconate dehydrogenase C-terminal domain-like"/>
    <property type="match status" value="1"/>
</dbReference>
<dbReference type="SUPFAM" id="SSF51735">
    <property type="entry name" value="NAD(P)-binding Rossmann-fold domains"/>
    <property type="match status" value="1"/>
</dbReference>
<dbReference type="PROSITE" id="PS51851">
    <property type="entry name" value="KARI_C"/>
    <property type="match status" value="1"/>
</dbReference>
<dbReference type="PROSITE" id="PS51850">
    <property type="entry name" value="KARI_N"/>
    <property type="match status" value="1"/>
</dbReference>
<organism>
    <name type="scientific">Campylobacter jejuni subsp. doylei (strain ATCC BAA-1458 / RM4099 / 269.97)</name>
    <dbReference type="NCBI Taxonomy" id="360109"/>
    <lineage>
        <taxon>Bacteria</taxon>
        <taxon>Pseudomonadati</taxon>
        <taxon>Campylobacterota</taxon>
        <taxon>Epsilonproteobacteria</taxon>
        <taxon>Campylobacterales</taxon>
        <taxon>Campylobacteraceae</taxon>
        <taxon>Campylobacter</taxon>
    </lineage>
</organism>
<proteinExistence type="inferred from homology"/>
<comment type="function">
    <text evidence="1">Involved in the biosynthesis of branched-chain amino acids (BCAA). Catalyzes an alkyl-migration followed by a ketol-acid reduction of (S)-2-acetolactate (S2AL) to yield (R)-2,3-dihydroxy-isovalerate. In the isomerase reaction, S2AL is rearranged via a Mg-dependent methyl migration to produce 3-hydroxy-3-methyl-2-ketobutyrate (HMKB). In the reductase reaction, this 2-ketoacid undergoes a metal-dependent reduction by NADPH to yield (R)-2,3-dihydroxy-isovalerate.</text>
</comment>
<comment type="catalytic activity">
    <reaction evidence="1">
        <text>(2R)-2,3-dihydroxy-3-methylbutanoate + NADP(+) = (2S)-2-acetolactate + NADPH + H(+)</text>
        <dbReference type="Rhea" id="RHEA:22068"/>
        <dbReference type="ChEBI" id="CHEBI:15378"/>
        <dbReference type="ChEBI" id="CHEBI:49072"/>
        <dbReference type="ChEBI" id="CHEBI:57783"/>
        <dbReference type="ChEBI" id="CHEBI:58349"/>
        <dbReference type="ChEBI" id="CHEBI:58476"/>
        <dbReference type="EC" id="1.1.1.86"/>
    </reaction>
</comment>
<comment type="catalytic activity">
    <reaction evidence="1">
        <text>(2R,3R)-2,3-dihydroxy-3-methylpentanoate + NADP(+) = (S)-2-ethyl-2-hydroxy-3-oxobutanoate + NADPH + H(+)</text>
        <dbReference type="Rhea" id="RHEA:13493"/>
        <dbReference type="ChEBI" id="CHEBI:15378"/>
        <dbReference type="ChEBI" id="CHEBI:49256"/>
        <dbReference type="ChEBI" id="CHEBI:49258"/>
        <dbReference type="ChEBI" id="CHEBI:57783"/>
        <dbReference type="ChEBI" id="CHEBI:58349"/>
        <dbReference type="EC" id="1.1.1.86"/>
    </reaction>
</comment>
<comment type="cofactor">
    <cofactor evidence="1">
        <name>Mg(2+)</name>
        <dbReference type="ChEBI" id="CHEBI:18420"/>
    </cofactor>
    <text evidence="1">Binds 2 magnesium ions per subunit.</text>
</comment>
<comment type="pathway">
    <text evidence="1">Amino-acid biosynthesis; L-isoleucine biosynthesis; L-isoleucine from 2-oxobutanoate: step 2/4.</text>
</comment>
<comment type="pathway">
    <text evidence="1">Amino-acid biosynthesis; L-valine biosynthesis; L-valine from pyruvate: step 2/4.</text>
</comment>
<comment type="similarity">
    <text evidence="1">Belongs to the ketol-acid reductoisomerase family.</text>
</comment>
<feature type="chain" id="PRO_1000050497" description="Ketol-acid reductoisomerase (NADP(+))">
    <location>
        <begin position="1"/>
        <end position="340"/>
    </location>
</feature>
<feature type="domain" description="KARI N-terminal Rossmann" evidence="2">
    <location>
        <begin position="1"/>
        <end position="183"/>
    </location>
</feature>
<feature type="domain" description="KARI C-terminal knotted" evidence="3">
    <location>
        <begin position="184"/>
        <end position="329"/>
    </location>
</feature>
<feature type="active site" evidence="1">
    <location>
        <position position="109"/>
    </location>
</feature>
<feature type="binding site" evidence="1">
    <location>
        <begin position="26"/>
        <end position="29"/>
    </location>
    <ligand>
        <name>NADP(+)</name>
        <dbReference type="ChEBI" id="CHEBI:58349"/>
    </ligand>
</feature>
<feature type="binding site" evidence="1">
    <location>
        <position position="49"/>
    </location>
    <ligand>
        <name>NADP(+)</name>
        <dbReference type="ChEBI" id="CHEBI:58349"/>
    </ligand>
</feature>
<feature type="binding site" evidence="1">
    <location>
        <position position="52"/>
    </location>
    <ligand>
        <name>NADP(+)</name>
        <dbReference type="ChEBI" id="CHEBI:58349"/>
    </ligand>
</feature>
<feature type="binding site" evidence="1">
    <location>
        <position position="54"/>
    </location>
    <ligand>
        <name>NADP(+)</name>
        <dbReference type="ChEBI" id="CHEBI:58349"/>
    </ligand>
</feature>
<feature type="binding site" evidence="1">
    <location>
        <begin position="84"/>
        <end position="87"/>
    </location>
    <ligand>
        <name>NADP(+)</name>
        <dbReference type="ChEBI" id="CHEBI:58349"/>
    </ligand>
</feature>
<feature type="binding site" evidence="1">
    <location>
        <position position="135"/>
    </location>
    <ligand>
        <name>NADP(+)</name>
        <dbReference type="ChEBI" id="CHEBI:58349"/>
    </ligand>
</feature>
<feature type="binding site" evidence="1">
    <location>
        <position position="192"/>
    </location>
    <ligand>
        <name>Mg(2+)</name>
        <dbReference type="ChEBI" id="CHEBI:18420"/>
        <label>1</label>
    </ligand>
</feature>
<feature type="binding site" evidence="1">
    <location>
        <position position="192"/>
    </location>
    <ligand>
        <name>Mg(2+)</name>
        <dbReference type="ChEBI" id="CHEBI:18420"/>
        <label>2</label>
    </ligand>
</feature>
<feature type="binding site" evidence="1">
    <location>
        <position position="196"/>
    </location>
    <ligand>
        <name>Mg(2+)</name>
        <dbReference type="ChEBI" id="CHEBI:18420"/>
        <label>1</label>
    </ligand>
</feature>
<feature type="binding site" evidence="1">
    <location>
        <position position="228"/>
    </location>
    <ligand>
        <name>Mg(2+)</name>
        <dbReference type="ChEBI" id="CHEBI:18420"/>
        <label>2</label>
    </ligand>
</feature>
<feature type="binding site" evidence="1">
    <location>
        <position position="232"/>
    </location>
    <ligand>
        <name>Mg(2+)</name>
        <dbReference type="ChEBI" id="CHEBI:18420"/>
        <label>2</label>
    </ligand>
</feature>
<feature type="binding site" evidence="1">
    <location>
        <position position="253"/>
    </location>
    <ligand>
        <name>substrate</name>
    </ligand>
</feature>
<accession>A7H4H9</accession>
<protein>
    <recommendedName>
        <fullName evidence="1">Ketol-acid reductoisomerase (NADP(+))</fullName>
        <shortName evidence="1">KARI</shortName>
        <ecNumber evidence="1">1.1.1.86</ecNumber>
    </recommendedName>
    <alternativeName>
        <fullName evidence="1">Acetohydroxy-acid isomeroreductase</fullName>
        <shortName evidence="1">AHIR</shortName>
    </alternativeName>
    <alternativeName>
        <fullName evidence="1">Alpha-keto-beta-hydroxylacyl reductoisomerase</fullName>
    </alternativeName>
    <alternativeName>
        <fullName evidence="1">Ketol-acid reductoisomerase type 1</fullName>
    </alternativeName>
    <alternativeName>
        <fullName evidence="1">Ketol-acid reductoisomerase type I</fullName>
    </alternativeName>
</protein>
<name>ILVC_CAMJD</name>
<sequence>MAITVYYDKDCDLNLIQSKKVAIIGFGSQGHAHAMNLRDNGVNVIIGLREGSVSAVKAKNAGFEVMSASEASKMADVIMILAPDEIQADIFNVEIKPNLSEGKAIAFAHGFNIHYGQIVVPKGVDVIMIAPKAPGHTVRNEFTLGGGTPCLIAIHQDESKNAKNLALSYASAIGGGRTGIIETTFKAETETDLFGEQAVLCGGLSALIQAGFETLVEAGYEPEMAYFECLHEMKLIVDLIYQGGIADMRYSISNTAEYGDYITGSKIITEETKKAMKGVLKDIQNGVFAKDFILERRAGFARMHAERKNMNDSLIEKTGRNLRAMMPWISAKKLVDKDKN</sequence>
<reference key="1">
    <citation type="submission" date="2007-07" db="EMBL/GenBank/DDBJ databases">
        <title>Complete genome sequence of Campylobacter jejuni subsp doylei 269.97 isolated from human blood.</title>
        <authorList>
            <person name="Fouts D.E."/>
            <person name="Mongodin E.F."/>
            <person name="Puiu D."/>
            <person name="Sebastian Y."/>
            <person name="Miller W.G."/>
            <person name="Mandrell R.E."/>
            <person name="Lastovica A.J."/>
            <person name="Nelson K.E."/>
        </authorList>
    </citation>
    <scope>NUCLEOTIDE SEQUENCE [LARGE SCALE GENOMIC DNA]</scope>
    <source>
        <strain>ATCC BAA-1458 / RM4099 / 269.97</strain>
    </source>
</reference>
<evidence type="ECO:0000255" key="1">
    <source>
        <dbReference type="HAMAP-Rule" id="MF_00435"/>
    </source>
</evidence>
<evidence type="ECO:0000255" key="2">
    <source>
        <dbReference type="PROSITE-ProRule" id="PRU01197"/>
    </source>
</evidence>
<evidence type="ECO:0000255" key="3">
    <source>
        <dbReference type="PROSITE-ProRule" id="PRU01198"/>
    </source>
</evidence>
<keyword id="KW-0028">Amino-acid biosynthesis</keyword>
<keyword id="KW-0100">Branched-chain amino acid biosynthesis</keyword>
<keyword id="KW-0460">Magnesium</keyword>
<keyword id="KW-0479">Metal-binding</keyword>
<keyword id="KW-0521">NADP</keyword>
<keyword id="KW-0560">Oxidoreductase</keyword>